<comment type="subcellular location">
    <subcellularLocation>
        <location evidence="5">Cell membrane</location>
        <topology evidence="5">Single-pass membrane protein</topology>
    </subcellularLocation>
</comment>
<comment type="similarity">
    <text evidence="5">Belongs to the peptidase S41A family.</text>
</comment>
<dbReference type="EC" id="3.4.21.-"/>
<dbReference type="EMBL" id="BA000033">
    <property type="protein sequence ID" value="BAB95175.1"/>
    <property type="molecule type" value="Genomic_DNA"/>
</dbReference>
<dbReference type="RefSeq" id="WP_000342126.1">
    <property type="nucleotide sequence ID" value="NC_003923.1"/>
</dbReference>
<dbReference type="SMR" id="Q8NWR2"/>
<dbReference type="KEGG" id="sam:MW1310"/>
<dbReference type="HOGENOM" id="CLU_017295_3_0_9"/>
<dbReference type="GO" id="GO:0030288">
    <property type="term" value="C:outer membrane-bounded periplasmic space"/>
    <property type="evidence" value="ECO:0007669"/>
    <property type="project" value="TreeGrafter"/>
</dbReference>
<dbReference type="GO" id="GO:0005886">
    <property type="term" value="C:plasma membrane"/>
    <property type="evidence" value="ECO:0007669"/>
    <property type="project" value="UniProtKB-SubCell"/>
</dbReference>
<dbReference type="GO" id="GO:0004175">
    <property type="term" value="F:endopeptidase activity"/>
    <property type="evidence" value="ECO:0007669"/>
    <property type="project" value="TreeGrafter"/>
</dbReference>
<dbReference type="GO" id="GO:0008236">
    <property type="term" value="F:serine-type peptidase activity"/>
    <property type="evidence" value="ECO:0007669"/>
    <property type="project" value="UniProtKB-KW"/>
</dbReference>
<dbReference type="GO" id="GO:0006508">
    <property type="term" value="P:proteolysis"/>
    <property type="evidence" value="ECO:0007669"/>
    <property type="project" value="UniProtKB-KW"/>
</dbReference>
<dbReference type="GO" id="GO:0007165">
    <property type="term" value="P:signal transduction"/>
    <property type="evidence" value="ECO:0007669"/>
    <property type="project" value="TreeGrafter"/>
</dbReference>
<dbReference type="CDD" id="cd06782">
    <property type="entry name" value="cpPDZ_CPP-like"/>
    <property type="match status" value="1"/>
</dbReference>
<dbReference type="CDD" id="cd07560">
    <property type="entry name" value="Peptidase_S41_CPP"/>
    <property type="match status" value="1"/>
</dbReference>
<dbReference type="FunFam" id="2.30.42.10:FF:000063">
    <property type="entry name" value="Peptidase, S41 family"/>
    <property type="match status" value="1"/>
</dbReference>
<dbReference type="FunFam" id="3.30.750.44:FF:000001">
    <property type="entry name" value="S41 family peptidase"/>
    <property type="match status" value="1"/>
</dbReference>
<dbReference type="Gene3D" id="2.30.42.10">
    <property type="match status" value="1"/>
</dbReference>
<dbReference type="Gene3D" id="3.30.750.44">
    <property type="match status" value="1"/>
</dbReference>
<dbReference type="Gene3D" id="3.90.226.10">
    <property type="entry name" value="2-enoyl-CoA Hydratase, Chain A, domain 1"/>
    <property type="match status" value="1"/>
</dbReference>
<dbReference type="Gene3D" id="1.10.101.10">
    <property type="entry name" value="PGBD-like superfamily/PGBD"/>
    <property type="match status" value="1"/>
</dbReference>
<dbReference type="InterPro" id="IPR029045">
    <property type="entry name" value="ClpP/crotonase-like_dom_sf"/>
</dbReference>
<dbReference type="InterPro" id="IPR055210">
    <property type="entry name" value="CtpA/B_N"/>
</dbReference>
<dbReference type="InterPro" id="IPR001478">
    <property type="entry name" value="PDZ"/>
</dbReference>
<dbReference type="InterPro" id="IPR041489">
    <property type="entry name" value="PDZ_6"/>
</dbReference>
<dbReference type="InterPro" id="IPR036034">
    <property type="entry name" value="PDZ_sf"/>
</dbReference>
<dbReference type="InterPro" id="IPR004447">
    <property type="entry name" value="Peptidase_S41A"/>
</dbReference>
<dbReference type="InterPro" id="IPR002477">
    <property type="entry name" value="Peptidoglycan-bd-like"/>
</dbReference>
<dbReference type="InterPro" id="IPR036365">
    <property type="entry name" value="PGBD-like_sf"/>
</dbReference>
<dbReference type="InterPro" id="IPR036366">
    <property type="entry name" value="PGBDSf"/>
</dbReference>
<dbReference type="InterPro" id="IPR005151">
    <property type="entry name" value="Tail-specific_protease"/>
</dbReference>
<dbReference type="NCBIfam" id="TIGR00225">
    <property type="entry name" value="prc"/>
    <property type="match status" value="1"/>
</dbReference>
<dbReference type="PANTHER" id="PTHR32060:SF30">
    <property type="entry name" value="CARBOXY-TERMINAL PROCESSING PROTEASE CTPA"/>
    <property type="match status" value="1"/>
</dbReference>
<dbReference type="PANTHER" id="PTHR32060">
    <property type="entry name" value="TAIL-SPECIFIC PROTEASE"/>
    <property type="match status" value="1"/>
</dbReference>
<dbReference type="Pfam" id="PF22694">
    <property type="entry name" value="CtpB_N-like"/>
    <property type="match status" value="1"/>
</dbReference>
<dbReference type="Pfam" id="PF17820">
    <property type="entry name" value="PDZ_6"/>
    <property type="match status" value="1"/>
</dbReference>
<dbReference type="Pfam" id="PF03572">
    <property type="entry name" value="Peptidase_S41"/>
    <property type="match status" value="1"/>
</dbReference>
<dbReference type="Pfam" id="PF01471">
    <property type="entry name" value="PG_binding_1"/>
    <property type="match status" value="1"/>
</dbReference>
<dbReference type="SMART" id="SM00228">
    <property type="entry name" value="PDZ"/>
    <property type="match status" value="1"/>
</dbReference>
<dbReference type="SMART" id="SM00245">
    <property type="entry name" value="TSPc"/>
    <property type="match status" value="1"/>
</dbReference>
<dbReference type="SUPFAM" id="SSF52096">
    <property type="entry name" value="ClpP/crotonase"/>
    <property type="match status" value="1"/>
</dbReference>
<dbReference type="SUPFAM" id="SSF50156">
    <property type="entry name" value="PDZ domain-like"/>
    <property type="match status" value="1"/>
</dbReference>
<dbReference type="SUPFAM" id="SSF47090">
    <property type="entry name" value="PGBD-like"/>
    <property type="match status" value="1"/>
</dbReference>
<dbReference type="PROSITE" id="PS50106">
    <property type="entry name" value="PDZ"/>
    <property type="match status" value="1"/>
</dbReference>
<sequence length="496" mass="55275">MDDKQHTSSSDDERAEIATSNQDQETNSSKRVHLKRWQFISILIGTILITAVITVVAYIFINQKISGLNKTDQANLNKIENVYKILNSDYYKKQDSDKLSKAAIDGMVKELKDPYSEYLTKEQTKSFNEGVSGDFVGIGAEMQKKNDQIMVTSPMKGSPAERAGIRPKDVITKVNGKSIKGKALDEVVKDVRGKENTEVTLTVQRGSEEKDVKIKREKIHVKSVEYKKKGKVGVITINKFQNDTSGELKDAVLKAHKDGLKKIVLDLRNNPGGLLDEAVKMANIFIDKGKTVVKLEKGKDTEAIQTSNDALKEAKDMDISILVNEGSASASEVFTGALKDYNKAKVYGSKTFGKGVVQTTREFKDGSLLKYTEMKWLTPDGHYIHGKGIKPDVTIDTPKYQSLNVIPNTKTFKVGDDDKNIKTIKIGLSALGYKVDNETTQFDQALENQVKAFQQANKLEVTGEFNKETNNKFTELLVEKANKHDDVLDKLINILK</sequence>
<name>CTPAL_STAAW</name>
<organism>
    <name type="scientific">Staphylococcus aureus (strain MW2)</name>
    <dbReference type="NCBI Taxonomy" id="196620"/>
    <lineage>
        <taxon>Bacteria</taxon>
        <taxon>Bacillati</taxon>
        <taxon>Bacillota</taxon>
        <taxon>Bacilli</taxon>
        <taxon>Bacillales</taxon>
        <taxon>Staphylococcaceae</taxon>
        <taxon>Staphylococcus</taxon>
    </lineage>
</organism>
<evidence type="ECO:0000250" key="1"/>
<evidence type="ECO:0000255" key="2"/>
<evidence type="ECO:0000255" key="3">
    <source>
        <dbReference type="PROSITE-ProRule" id="PRU00143"/>
    </source>
</evidence>
<evidence type="ECO:0000256" key="4">
    <source>
        <dbReference type="SAM" id="MobiDB-lite"/>
    </source>
</evidence>
<evidence type="ECO:0000305" key="5"/>
<protein>
    <recommendedName>
        <fullName>Probable CtpA-like serine protease</fullName>
        <ecNumber>3.4.21.-</ecNumber>
    </recommendedName>
</protein>
<reference key="1">
    <citation type="journal article" date="2002" name="Lancet">
        <title>Genome and virulence determinants of high virulence community-acquired MRSA.</title>
        <authorList>
            <person name="Baba T."/>
            <person name="Takeuchi F."/>
            <person name="Kuroda M."/>
            <person name="Yuzawa H."/>
            <person name="Aoki K."/>
            <person name="Oguchi A."/>
            <person name="Nagai Y."/>
            <person name="Iwama N."/>
            <person name="Asano K."/>
            <person name="Naimi T."/>
            <person name="Kuroda H."/>
            <person name="Cui L."/>
            <person name="Yamamoto K."/>
            <person name="Hiramatsu K."/>
        </authorList>
    </citation>
    <scope>NUCLEOTIDE SEQUENCE [LARGE SCALE GENOMIC DNA]</scope>
    <source>
        <strain>MW2</strain>
    </source>
</reference>
<accession>Q8NWR2</accession>
<keyword id="KW-1003">Cell membrane</keyword>
<keyword id="KW-0378">Hydrolase</keyword>
<keyword id="KW-0472">Membrane</keyword>
<keyword id="KW-0645">Protease</keyword>
<keyword id="KW-0720">Serine protease</keyword>
<keyword id="KW-0812">Transmembrane</keyword>
<keyword id="KW-1133">Transmembrane helix</keyword>
<feature type="chain" id="PRO_0000233194" description="Probable CtpA-like serine protease">
    <location>
        <begin position="1"/>
        <end position="496"/>
    </location>
</feature>
<feature type="transmembrane region" description="Helical" evidence="2">
    <location>
        <begin position="39"/>
        <end position="59"/>
    </location>
</feature>
<feature type="domain" description="PDZ" evidence="3">
    <location>
        <begin position="124"/>
        <end position="206"/>
    </location>
</feature>
<feature type="region of interest" description="Disordered" evidence="4">
    <location>
        <begin position="1"/>
        <end position="27"/>
    </location>
</feature>
<feature type="compositionally biased region" description="Basic and acidic residues" evidence="4">
    <location>
        <begin position="1"/>
        <end position="16"/>
    </location>
</feature>
<feature type="compositionally biased region" description="Polar residues" evidence="4">
    <location>
        <begin position="18"/>
        <end position="27"/>
    </location>
</feature>
<feature type="active site" description="Charge relay system" evidence="1">
    <location>
        <position position="329"/>
    </location>
</feature>
<feature type="active site" description="Charge relay system" evidence="1">
    <location>
        <position position="340"/>
    </location>
</feature>
<feature type="active site" description="Charge relay system" evidence="1">
    <location>
        <position position="354"/>
    </location>
</feature>
<proteinExistence type="inferred from homology"/>
<gene>
    <name type="ordered locus">MW1310</name>
</gene>